<protein>
    <recommendedName>
        <fullName evidence="2">Small ribosomal subunit protein uS12</fullName>
    </recommendedName>
    <alternativeName>
        <fullName evidence="3">30S ribosomal protein S12</fullName>
    </alternativeName>
</protein>
<feature type="chain" id="PRO_1000072259" description="Small ribosomal subunit protein uS12">
    <location>
        <begin position="1"/>
        <end position="124"/>
    </location>
</feature>
<feature type="modified residue" description="3-methylthioaspartic acid" evidence="1">
    <location>
        <position position="89"/>
    </location>
</feature>
<sequence>MATTNQLIRKGRKVLKEKSGVPALQACPQRRGVCTRVYTTTPKKPNSAMRKVCRVRLTSGYEVSSYIGGEGHNLQEHSVVLIRGGRVKDLPGVRYHTVRGALDCAGVKDRKQGRSKYGAKKPKA</sequence>
<evidence type="ECO:0000250" key="1"/>
<evidence type="ECO:0000255" key="2">
    <source>
        <dbReference type="HAMAP-Rule" id="MF_00403"/>
    </source>
</evidence>
<evidence type="ECO:0000305" key="3"/>
<name>RS12_PSYWF</name>
<dbReference type="EMBL" id="CP000713">
    <property type="protein sequence ID" value="ABQ94803.1"/>
    <property type="molecule type" value="Genomic_DNA"/>
</dbReference>
<dbReference type="SMR" id="A5WGL2"/>
<dbReference type="STRING" id="349106.PsycPRwf_1863"/>
<dbReference type="KEGG" id="prw:PsycPRwf_1863"/>
<dbReference type="eggNOG" id="COG0048">
    <property type="taxonomic scope" value="Bacteria"/>
</dbReference>
<dbReference type="HOGENOM" id="CLU_104295_1_2_6"/>
<dbReference type="GO" id="GO:0015935">
    <property type="term" value="C:small ribosomal subunit"/>
    <property type="evidence" value="ECO:0007669"/>
    <property type="project" value="InterPro"/>
</dbReference>
<dbReference type="GO" id="GO:0019843">
    <property type="term" value="F:rRNA binding"/>
    <property type="evidence" value="ECO:0007669"/>
    <property type="project" value="UniProtKB-UniRule"/>
</dbReference>
<dbReference type="GO" id="GO:0003735">
    <property type="term" value="F:structural constituent of ribosome"/>
    <property type="evidence" value="ECO:0007669"/>
    <property type="project" value="InterPro"/>
</dbReference>
<dbReference type="GO" id="GO:0000049">
    <property type="term" value="F:tRNA binding"/>
    <property type="evidence" value="ECO:0007669"/>
    <property type="project" value="UniProtKB-UniRule"/>
</dbReference>
<dbReference type="GO" id="GO:0006412">
    <property type="term" value="P:translation"/>
    <property type="evidence" value="ECO:0007669"/>
    <property type="project" value="UniProtKB-UniRule"/>
</dbReference>
<dbReference type="CDD" id="cd03368">
    <property type="entry name" value="Ribosomal_S12"/>
    <property type="match status" value="1"/>
</dbReference>
<dbReference type="FunFam" id="2.40.50.140:FF:000001">
    <property type="entry name" value="30S ribosomal protein S12"/>
    <property type="match status" value="1"/>
</dbReference>
<dbReference type="Gene3D" id="2.40.50.140">
    <property type="entry name" value="Nucleic acid-binding proteins"/>
    <property type="match status" value="1"/>
</dbReference>
<dbReference type="HAMAP" id="MF_00403_B">
    <property type="entry name" value="Ribosomal_uS12_B"/>
    <property type="match status" value="1"/>
</dbReference>
<dbReference type="InterPro" id="IPR012340">
    <property type="entry name" value="NA-bd_OB-fold"/>
</dbReference>
<dbReference type="InterPro" id="IPR006032">
    <property type="entry name" value="Ribosomal_uS12"/>
</dbReference>
<dbReference type="InterPro" id="IPR005679">
    <property type="entry name" value="Ribosomal_uS12_bac"/>
</dbReference>
<dbReference type="NCBIfam" id="TIGR00981">
    <property type="entry name" value="rpsL_bact"/>
    <property type="match status" value="1"/>
</dbReference>
<dbReference type="PANTHER" id="PTHR11652">
    <property type="entry name" value="30S RIBOSOMAL PROTEIN S12 FAMILY MEMBER"/>
    <property type="match status" value="1"/>
</dbReference>
<dbReference type="Pfam" id="PF00164">
    <property type="entry name" value="Ribosom_S12_S23"/>
    <property type="match status" value="1"/>
</dbReference>
<dbReference type="PIRSF" id="PIRSF002133">
    <property type="entry name" value="Ribosomal_S12/S23"/>
    <property type="match status" value="1"/>
</dbReference>
<dbReference type="PRINTS" id="PR01034">
    <property type="entry name" value="RIBOSOMALS12"/>
</dbReference>
<dbReference type="SUPFAM" id="SSF50249">
    <property type="entry name" value="Nucleic acid-binding proteins"/>
    <property type="match status" value="1"/>
</dbReference>
<dbReference type="PROSITE" id="PS00055">
    <property type="entry name" value="RIBOSOMAL_S12"/>
    <property type="match status" value="1"/>
</dbReference>
<accession>A5WGL2</accession>
<gene>
    <name evidence="2" type="primary">rpsL</name>
    <name type="ordered locus">PsycPRwf_1863</name>
</gene>
<reference key="1">
    <citation type="submission" date="2007-05" db="EMBL/GenBank/DDBJ databases">
        <title>Complete sequence of chromosome of Psychrobacter sp. PRwf-1.</title>
        <authorList>
            <consortium name="US DOE Joint Genome Institute"/>
            <person name="Copeland A."/>
            <person name="Lucas S."/>
            <person name="Lapidus A."/>
            <person name="Barry K."/>
            <person name="Detter J.C."/>
            <person name="Glavina del Rio T."/>
            <person name="Hammon N."/>
            <person name="Israni S."/>
            <person name="Dalin E."/>
            <person name="Tice H."/>
            <person name="Pitluck S."/>
            <person name="Chain P."/>
            <person name="Malfatti S."/>
            <person name="Shin M."/>
            <person name="Vergez L."/>
            <person name="Schmutz J."/>
            <person name="Larimer F."/>
            <person name="Land M."/>
            <person name="Hauser L."/>
            <person name="Kyrpides N."/>
            <person name="Kim E."/>
            <person name="Tiedje J."/>
            <person name="Richardson P."/>
        </authorList>
    </citation>
    <scope>NUCLEOTIDE SEQUENCE [LARGE SCALE GENOMIC DNA]</scope>
    <source>
        <strain>PRwf-1</strain>
    </source>
</reference>
<keyword id="KW-0488">Methylation</keyword>
<keyword id="KW-0687">Ribonucleoprotein</keyword>
<keyword id="KW-0689">Ribosomal protein</keyword>
<keyword id="KW-0694">RNA-binding</keyword>
<keyword id="KW-0699">rRNA-binding</keyword>
<keyword id="KW-0820">tRNA-binding</keyword>
<organism>
    <name type="scientific">Psychrobacter sp. (strain PRwf-1)</name>
    <dbReference type="NCBI Taxonomy" id="349106"/>
    <lineage>
        <taxon>Bacteria</taxon>
        <taxon>Pseudomonadati</taxon>
        <taxon>Pseudomonadota</taxon>
        <taxon>Gammaproteobacteria</taxon>
        <taxon>Moraxellales</taxon>
        <taxon>Moraxellaceae</taxon>
        <taxon>Psychrobacter</taxon>
    </lineage>
</organism>
<proteinExistence type="inferred from homology"/>
<comment type="function">
    <text evidence="2">With S4 and S5 plays an important role in translational accuracy.</text>
</comment>
<comment type="function">
    <text evidence="2">Interacts with and stabilizes bases of the 16S rRNA that are involved in tRNA selection in the A site and with the mRNA backbone. Located at the interface of the 30S and 50S subunits, it traverses the body of the 30S subunit contacting proteins on the other side and probably holding the rRNA structure together. The combined cluster of proteins S8, S12 and S17 appears to hold together the shoulder and platform of the 30S subunit.</text>
</comment>
<comment type="subunit">
    <text evidence="2">Part of the 30S ribosomal subunit. Contacts proteins S8 and S17. May interact with IF1 in the 30S initiation complex.</text>
</comment>
<comment type="similarity">
    <text evidence="2">Belongs to the universal ribosomal protein uS12 family.</text>
</comment>